<accession>A5JYW9</accession>
<accession>O01319</accession>
<keyword id="KW-0025">Alternative splicing</keyword>
<keyword id="KW-0539">Nucleus</keyword>
<keyword id="KW-1185">Reference proteome</keyword>
<keyword id="KW-0678">Repressor</keyword>
<evidence type="ECO:0000250" key="1">
    <source>
        <dbReference type="UniProtKB" id="O75182"/>
    </source>
</evidence>
<evidence type="ECO:0000255" key="2">
    <source>
        <dbReference type="PROSITE-ProRule" id="PRU00810"/>
    </source>
</evidence>
<evidence type="ECO:0000256" key="3">
    <source>
        <dbReference type="SAM" id="MobiDB-lite"/>
    </source>
</evidence>
<evidence type="ECO:0000269" key="4">
    <source>
    </source>
</evidence>
<evidence type="ECO:0000269" key="5">
    <source>
    </source>
</evidence>
<evidence type="ECO:0000269" key="6">
    <source>
    </source>
</evidence>
<evidence type="ECO:0000269" key="7">
    <source>
    </source>
</evidence>
<evidence type="ECO:0000269" key="8">
    <source>
    </source>
</evidence>
<evidence type="ECO:0000303" key="9">
    <source>
    </source>
</evidence>
<evidence type="ECO:0000305" key="10"/>
<evidence type="ECO:0000305" key="11">
    <source>
    </source>
</evidence>
<evidence type="ECO:0000312" key="12">
    <source>
        <dbReference type="Proteomes" id="UP000001940"/>
    </source>
</evidence>
<evidence type="ECO:0000312" key="13">
    <source>
        <dbReference type="WormBase" id="F02E9.4a"/>
    </source>
</evidence>
<evidence type="ECO:0000312" key="14">
    <source>
        <dbReference type="WormBase" id="F02E9.4b"/>
    </source>
</evidence>
<name>SIN3_CAEEL</name>
<sequence length="1507" mass="171747">MYNPPPGGGGGNNGGDQSQQQPTNNATLFLLQMIQQSQHQQQHQNQQQQQLELQIRDQERILIEQQRMQHQQQQNQLLQGLNQFPFNPLGLFQVQAAVQAAQAQFAQNAQGSPIPFHIGSPLQPSHSPAASALQQQYLLPSHSPAITPFARNSEAARNIEQFIAQEEAANVPRANSQQQSPLIRPIPQQQALNIQNLTSTQQAQQILAHHRQVPVQQVQHQQHIPTPPLALPIAQQGPISNEVPSVPPVVPATSAGCPQREPRQQQGGRRQNRPGRRKKPEGPPRVDEALAYLRVIKSTFSSDVPVYHRFLEIMKDFRAQRIETPDVIEQVAELLYDSPELVLGFNTFLPTGYRITLTPDRKYVFSSPQMQPRVLLSPDERRARAIEAGAQAVGAIELGSQEGISKDEDRTIEDEDMDKSKEKDDVDGIDDEDDEESGIEDKNNEEMMEEDNHLIEEIICDDRKKDDCEDSQQEIEMSSELAAHTLNIIELLKKSFLARPTKLVDFMTFIDFFMSDQQYKKDMEKLRKDDEDDEIEENEKIEVDDVPGPSNAPQEIKKPDDIEKKDSSKNLQIEESCSDYLVSMLANCCIGEPDLLAATIDFLPYLGKLLVNGSDAIALKIKTILHFSATNDRNDIPPVNRVNPSDVDMDLVKQMEKCKMGTKKNEKLKLKVAGQGDEGATVELMILKKSYRILYERLKSRTTPNQLSHLMVLINAYANLDITREQLISELPKIMGTSGSDLEMIILQLLGAEKEPKNRPENDMDAVMRKDLPAIQPKRGLRDQKMLQQVKNVEAATVCTLGPSYRFMKDTKATDCSGRVELDDDLKGVLNDTWTSIPSWSSEDTGSQAIKKSNLEEFHFKTEDERYELDIIVDSNRTVIEQLSKTLRDYEAMSDEDKKSFKLDKWLNASSRSTTIRVLAKVFTNSAQDFIDAAQKNPLVGLRRILESLKEKDLLWSRFQQDTNRTWRDALDKQMSAATTILNNQHKNYDQKAFKSKPLVNQIEQICEERRKNNSTDTSPHLILEYTPERKVYRDVNDVTGHFFHDLSGTKCDRDRTKIVLFSYRILMEWLCQEGQQVQIDLDNGEIFKFQGDLNEDENLMTLLNMDGRRICGDRVVPVSTSLESNESSIDHFSENLHQKRTRRTFYGDDSVYMIIRYHHMIQERFAKILSTQAIYAQEHFDNQKKNKRWEDGIGADMHGRKALQENIKQRRAAVNDIRNVRSCPSSSYETTLRELKQLGNAQMDIVAFEEAVKNLFPGDIVLFNNIDKLFSSLAKNIHHATCAEERENPIKLYLKYRQRIMNAERDEDMESVIQEYGQTAEEVLRGKNTYRFEFVEEQNKPFIKIWVIPREEKDDDDDDDEEGNEGGKDEDNVKDEDDGGDGEGRDGPDDDQPPPSNDDGDDEEDEDDEEDGPSGADEPESTSGSGNVPMDHLNIGENFLWSPPEEKVCTGKMTTNEKEQRNSVDYMKVTTTPRLRIHKRMLKEHKGCNVELMTGFQQLSAIVPLM</sequence>
<organism>
    <name type="scientific">Caenorhabditis elegans</name>
    <dbReference type="NCBI Taxonomy" id="6239"/>
    <lineage>
        <taxon>Eukaryota</taxon>
        <taxon>Metazoa</taxon>
        <taxon>Ecdysozoa</taxon>
        <taxon>Nematoda</taxon>
        <taxon>Chromadorea</taxon>
        <taxon>Rhabditida</taxon>
        <taxon>Rhabditina</taxon>
        <taxon>Rhabditomorpha</taxon>
        <taxon>Rhabditoidea</taxon>
        <taxon>Rhabditidae</taxon>
        <taxon>Peloderinae</taxon>
        <taxon>Caenorhabditis</taxon>
    </lineage>
</organism>
<reference key="1">
    <citation type="journal article" date="1998" name="Science">
        <title>Genome sequence of the nematode C. elegans: a platform for investigating biology.</title>
        <authorList>
            <consortium name="The C. elegans sequencing consortium"/>
        </authorList>
    </citation>
    <scope>NUCLEOTIDE SEQUENCE [LARGE SCALE GENOMIC DNA]</scope>
    <source>
        <strain evidence="12">Bristol N2</strain>
    </source>
</reference>
<reference key="2">
    <citation type="journal article" date="2006" name="PLoS Genet.">
        <title>Diverse chromatin remodeling genes antagonize the Rb-involved SynMuv pathways in C. elegans.</title>
        <authorList>
            <person name="Cui M."/>
            <person name="Kim E.B."/>
            <person name="Han M."/>
        </authorList>
    </citation>
    <scope>DISRUPTION PHENOTYPE</scope>
</reference>
<reference key="3">
    <citation type="journal article" date="2007" name="Biochem. Biophys. Res. Commun.">
        <title>C. elegans SIN-3 and its associated HDAC corepressor complex act as mediators of male sensory ray development.</title>
        <authorList>
            <person name="Choy S.W."/>
            <person name="Wong Y.-M."/>
            <person name="Ho S.H."/>
            <person name="Chow K.L."/>
        </authorList>
    </citation>
    <scope>FUNCTION</scope>
    <scope>TISSUE SPECIFICITY</scope>
    <scope>DEVELOPMENTAL STAGE</scope>
    <scope>DISRUPTION PHENOTYPE</scope>
</reference>
<reference key="4">
    <citation type="journal article" date="2011" name="PLoS Genet.">
        <title>Caenorhabditis elegans histone methyltransferase MET-2 shields the male X chromosome from checkpoint machinery and mediates meiotic sex chromosome inactivation.</title>
        <authorList>
            <person name="Checchi P.M."/>
            <person name="Engebrecht J."/>
        </authorList>
    </citation>
    <scope>FUNCTION</scope>
    <scope>DISRUPTION PHENOTYPE</scope>
</reference>
<reference key="5">
    <citation type="journal article" date="2019" name="Elife">
        <title>A Myt1 family transcription factor defines neuronal fate by repressing non-neuronal genes.</title>
        <authorList>
            <person name="Lee J."/>
            <person name="Taylor C.A."/>
            <person name="Barnes K.M."/>
            <person name="Shen A."/>
            <person name="Stewart E.V."/>
            <person name="Chen A."/>
            <person name="Xiang Y.K."/>
            <person name="Bao Z."/>
            <person name="Shen K."/>
        </authorList>
    </citation>
    <scope>INTERACTION WITH ZTF-11</scope>
</reference>
<reference evidence="10" key="6">
    <citation type="journal article" date="2019" name="Nucleic Acids Res.">
        <title>Physical and functional interaction between SET1/COMPASS complex component CFP-1 and a Sin3S HDAC complex in C. elegans.</title>
        <authorList>
            <person name="Beurton F."/>
            <person name="Stempor P."/>
            <person name="Caron M."/>
            <person name="Appert A."/>
            <person name="Dong Y."/>
            <person name="Chen R.A."/>
            <person name="Cluet D."/>
            <person name="Coute Y."/>
            <person name="Herbette M."/>
            <person name="Huang N."/>
            <person name="Polveche H."/>
            <person name="Spichty M."/>
            <person name="Bedet C."/>
            <person name="Ahringer J."/>
            <person name="Palladino F."/>
        </authorList>
    </citation>
    <scope>IDENTIFICATION IN THE SIN3S COMPLEX</scope>
    <scope>INTERACTION WITH CFP-1</scope>
    <scope>IDENTIFICATION BY MASS SPECTROMETRY</scope>
</reference>
<protein>
    <recommendedName>
        <fullName evidence="1">Paired amphipathic helix protein sin-3</fullName>
    </recommendedName>
    <alternativeName>
        <fullName evidence="1">Histone deacetylase complex subunit sin-3</fullName>
    </alternativeName>
    <alternativeName>
        <fullName evidence="1">Transcriptional corepressor sin-3</fullName>
    </alternativeName>
</protein>
<feature type="chain" id="PRO_0000437871" description="Paired amphipathic helix protein sin-3" evidence="10">
    <location>
        <begin position="1"/>
        <end position="1507"/>
    </location>
</feature>
<feature type="domain" description="PAH" evidence="2">
    <location>
        <begin position="282"/>
        <end position="352"/>
    </location>
</feature>
<feature type="region of interest" description="Disordered" evidence="3">
    <location>
        <begin position="1"/>
        <end position="26"/>
    </location>
</feature>
<feature type="region of interest" description="Disordered" evidence="3">
    <location>
        <begin position="228"/>
        <end position="286"/>
    </location>
</feature>
<feature type="region of interest" description="Disordered" evidence="3">
    <location>
        <begin position="397"/>
        <end position="450"/>
    </location>
</feature>
<feature type="region of interest" description="Disordered" evidence="3">
    <location>
        <begin position="543"/>
        <end position="569"/>
    </location>
</feature>
<feature type="region of interest" description="Disordered" evidence="3">
    <location>
        <begin position="1349"/>
        <end position="1434"/>
    </location>
</feature>
<feature type="compositionally biased region" description="Polar residues" evidence="3">
    <location>
        <begin position="16"/>
        <end position="26"/>
    </location>
</feature>
<feature type="compositionally biased region" description="Basic residues" evidence="3">
    <location>
        <begin position="270"/>
        <end position="279"/>
    </location>
</feature>
<feature type="compositionally biased region" description="Acidic residues" evidence="3">
    <location>
        <begin position="427"/>
        <end position="438"/>
    </location>
</feature>
<feature type="compositionally biased region" description="Basic and acidic residues" evidence="3">
    <location>
        <begin position="439"/>
        <end position="450"/>
    </location>
</feature>
<feature type="compositionally biased region" description="Basic and acidic residues" evidence="3">
    <location>
        <begin position="555"/>
        <end position="568"/>
    </location>
</feature>
<feature type="compositionally biased region" description="Acidic residues" evidence="3">
    <location>
        <begin position="1354"/>
        <end position="1365"/>
    </location>
</feature>
<feature type="compositionally biased region" description="Acidic residues" evidence="3">
    <location>
        <begin position="1373"/>
        <end position="1382"/>
    </location>
</feature>
<feature type="compositionally biased region" description="Acidic residues" evidence="3">
    <location>
        <begin position="1389"/>
        <end position="1421"/>
    </location>
</feature>
<feature type="splice variant" id="VSP_058573" description="In isoform a." evidence="10">
    <location>
        <begin position="1063"/>
        <end position="1064"/>
    </location>
</feature>
<proteinExistence type="evidence at protein level"/>
<dbReference type="EMBL" id="BX284601">
    <property type="protein sequence ID" value="CAB04052.2"/>
    <property type="molecule type" value="Genomic_DNA"/>
</dbReference>
<dbReference type="EMBL" id="BX284601">
    <property type="protein sequence ID" value="CAN86581.1"/>
    <property type="molecule type" value="Genomic_DNA"/>
</dbReference>
<dbReference type="PIR" id="T20513">
    <property type="entry name" value="T20513"/>
</dbReference>
<dbReference type="RefSeq" id="NP_001122442.1">
    <molecule id="A5JYW9-1"/>
    <property type="nucleotide sequence ID" value="NM_001128970.5"/>
</dbReference>
<dbReference type="RefSeq" id="NP_492284.2">
    <molecule id="A5JYW9-2"/>
    <property type="nucleotide sequence ID" value="NM_059883.5"/>
</dbReference>
<dbReference type="SMR" id="A5JYW9"/>
<dbReference type="FunCoup" id="A5JYW9">
    <property type="interactions" value="2781"/>
</dbReference>
<dbReference type="IntAct" id="A5JYW9">
    <property type="interactions" value="17"/>
</dbReference>
<dbReference type="STRING" id="6239.F02E9.4b.1"/>
<dbReference type="iPTMnet" id="A5JYW9"/>
<dbReference type="PaxDb" id="6239-F02E9.4b"/>
<dbReference type="PeptideAtlas" id="A5JYW9"/>
<dbReference type="EnsemblMetazoa" id="F02E9.4a.1">
    <molecule id="A5JYW9-2"/>
    <property type="protein sequence ID" value="F02E9.4a.1"/>
    <property type="gene ID" value="WBGene00004117"/>
</dbReference>
<dbReference type="EnsemblMetazoa" id="F02E9.4b.1">
    <molecule id="A5JYW9-1"/>
    <property type="protein sequence ID" value="F02E9.4b.1"/>
    <property type="gene ID" value="WBGene00004117"/>
</dbReference>
<dbReference type="GeneID" id="172628"/>
<dbReference type="KEGG" id="cel:CELE_F02E9.4"/>
<dbReference type="UCSC" id="F02E9.4b">
    <property type="organism name" value="c. elegans"/>
</dbReference>
<dbReference type="AGR" id="WB:WBGene00004117"/>
<dbReference type="CTD" id="172628"/>
<dbReference type="WormBase" id="F02E9.4a">
    <molecule id="A5JYW9-2"/>
    <property type="protein sequence ID" value="CE33046"/>
    <property type="gene ID" value="WBGene00004117"/>
    <property type="gene designation" value="sin-3"/>
</dbReference>
<dbReference type="WormBase" id="F02E9.4b">
    <molecule id="A5JYW9-1"/>
    <property type="protein sequence ID" value="CE40934"/>
    <property type="gene ID" value="WBGene00004117"/>
    <property type="gene designation" value="sin-3"/>
</dbReference>
<dbReference type="eggNOG" id="KOG4204">
    <property type="taxonomic scope" value="Eukaryota"/>
</dbReference>
<dbReference type="GeneTree" id="ENSGT00940000171042"/>
<dbReference type="HOGENOM" id="CLU_242902_0_0_1"/>
<dbReference type="InParanoid" id="A5JYW9"/>
<dbReference type="OMA" id="LISHNIG"/>
<dbReference type="OrthoDB" id="10265969at2759"/>
<dbReference type="PhylomeDB" id="A5JYW9"/>
<dbReference type="Reactome" id="R-CEL-8936459">
    <property type="pathway name" value="RUNX1 regulates genes involved in megakaryocyte differentiation and platelet function"/>
</dbReference>
<dbReference type="Reactome" id="R-CEL-9824594">
    <property type="pathway name" value="Regulation of MITF-M-dependent genes involved in apoptosis"/>
</dbReference>
<dbReference type="Reactome" id="R-CEL-9825892">
    <property type="pathway name" value="Regulation of MITF-M-dependent genes involved in cell cycle and proliferation"/>
</dbReference>
<dbReference type="SignaLink" id="A5JYW9"/>
<dbReference type="PRO" id="PR:A5JYW9"/>
<dbReference type="Proteomes" id="UP000001940">
    <property type="component" value="Chromosome I"/>
</dbReference>
<dbReference type="Bgee" id="WBGene00004117">
    <property type="expression patterns" value="Expressed in adult organism and 4 other cell types or tissues"/>
</dbReference>
<dbReference type="GO" id="GO:0000785">
    <property type="term" value="C:chromatin"/>
    <property type="evidence" value="ECO:0000318"/>
    <property type="project" value="GO_Central"/>
</dbReference>
<dbReference type="GO" id="GO:0070822">
    <property type="term" value="C:Sin3-type complex"/>
    <property type="evidence" value="ECO:0000318"/>
    <property type="project" value="GO_Central"/>
</dbReference>
<dbReference type="GO" id="GO:0003714">
    <property type="term" value="F:transcription corepressor activity"/>
    <property type="evidence" value="ECO:0000318"/>
    <property type="project" value="GO_Central"/>
</dbReference>
<dbReference type="GO" id="GO:0001708">
    <property type="term" value="P:cell fate specification"/>
    <property type="evidence" value="ECO:0000315"/>
    <property type="project" value="WormBase"/>
</dbReference>
<dbReference type="GO" id="GO:0098542">
    <property type="term" value="P:defense response to other organism"/>
    <property type="evidence" value="ECO:0000316"/>
    <property type="project" value="UniProtKB"/>
</dbReference>
<dbReference type="GO" id="GO:0040011">
    <property type="term" value="P:locomotion"/>
    <property type="evidence" value="ECO:0000315"/>
    <property type="project" value="WormBase"/>
</dbReference>
<dbReference type="GO" id="GO:0000122">
    <property type="term" value="P:negative regulation of transcription by RNA polymerase II"/>
    <property type="evidence" value="ECO:0000318"/>
    <property type="project" value="GO_Central"/>
</dbReference>
<dbReference type="GO" id="GO:0090597">
    <property type="term" value="P:nematode male tail mating organ morphogenesis"/>
    <property type="evidence" value="ECO:0000315"/>
    <property type="project" value="WormBase"/>
</dbReference>
<dbReference type="GO" id="GO:0034976">
    <property type="term" value="P:response to endoplasmic reticulum stress"/>
    <property type="evidence" value="ECO:0000316"/>
    <property type="project" value="UniProtKB"/>
</dbReference>
<dbReference type="GO" id="GO:0040025">
    <property type="term" value="P:vulval development"/>
    <property type="evidence" value="ECO:0000315"/>
    <property type="project" value="WormBase"/>
</dbReference>
<dbReference type="FunFam" id="1.20.1160.11:FF:000001">
    <property type="entry name" value="Paired amphipathic helix protein Sin3"/>
    <property type="match status" value="1"/>
</dbReference>
<dbReference type="Gene3D" id="1.20.1160.11">
    <property type="entry name" value="Paired amphipathic helix"/>
    <property type="match status" value="1"/>
</dbReference>
<dbReference type="InterPro" id="IPR013194">
    <property type="entry name" value="HDAC_interact_dom"/>
</dbReference>
<dbReference type="InterPro" id="IPR003822">
    <property type="entry name" value="PAH"/>
</dbReference>
<dbReference type="InterPro" id="IPR036600">
    <property type="entry name" value="PAH_sf"/>
</dbReference>
<dbReference type="InterPro" id="IPR039774">
    <property type="entry name" value="Sin3-like"/>
</dbReference>
<dbReference type="InterPro" id="IPR031693">
    <property type="entry name" value="Sin3_C"/>
</dbReference>
<dbReference type="PANTHER" id="PTHR12346:SF0">
    <property type="entry name" value="SIN3A, ISOFORM G"/>
    <property type="match status" value="1"/>
</dbReference>
<dbReference type="PANTHER" id="PTHR12346">
    <property type="entry name" value="SIN3B-RELATED"/>
    <property type="match status" value="1"/>
</dbReference>
<dbReference type="Pfam" id="PF02671">
    <property type="entry name" value="PAH"/>
    <property type="match status" value="1"/>
</dbReference>
<dbReference type="Pfam" id="PF08295">
    <property type="entry name" value="Sin3_corepress"/>
    <property type="match status" value="1"/>
</dbReference>
<dbReference type="Pfam" id="PF16879">
    <property type="entry name" value="Sin3a_C"/>
    <property type="match status" value="1"/>
</dbReference>
<dbReference type="SMART" id="SM00761">
    <property type="entry name" value="HDAC_interact"/>
    <property type="match status" value="1"/>
</dbReference>
<dbReference type="SUPFAM" id="SSF47762">
    <property type="entry name" value="PAH2 domain"/>
    <property type="match status" value="1"/>
</dbReference>
<dbReference type="PROSITE" id="PS51477">
    <property type="entry name" value="PAH"/>
    <property type="match status" value="1"/>
</dbReference>
<gene>
    <name evidence="14" type="primary">sin-3</name>
    <name evidence="9" type="synonym">pqn-28</name>
    <name evidence="14" type="ORF">F02E9.4</name>
</gene>
<comment type="function">
    <text evidence="5 6 11">Probable transcriptional repressor required for the deposition of dimethylated 'Lys-9' of histone H3 (H3K9me2) on asynapsed chromosome pairs (both autosomes and sex chromosomes) during meiosis, but this does not seem to solely affect the transcriptional status (PubMed:21909284). Plays a role in ray fusion and patterning in the male tail, and this may be through activity of the histone deacetylase complex (HDAC) (PubMed:17506990).</text>
</comment>
<comment type="subunit">
    <text evidence="7 8">Component of the SIN3S complex, which contains at least sin-3, hda-1, athp-1 and mrg-1 (PubMed:31602465). Interacts with ztf-11; the interaction is weak (PubMed:31386623). Interacts with cfp-1 (PubMed:31602465).</text>
</comment>
<comment type="subcellular location">
    <subcellularLocation>
        <location evidence="2">Nucleus</location>
    </subcellularLocation>
</comment>
<comment type="alternative products">
    <event type="alternative splicing"/>
    <isoform>
        <id>A5JYW9-1</id>
        <name evidence="14">b</name>
        <sequence type="displayed"/>
    </isoform>
    <isoform>
        <id>A5JYW9-2</id>
        <name evidence="13">a</name>
        <sequence type="described" ref="VSP_058573"/>
    </isoform>
</comment>
<comment type="tissue specificity">
    <text evidence="5">Expressed in all ray structural cells including ray 6, 7, 8 and 9 of the male tail. Also expressed in the inner labial neurons, socket cells, the cephalic neurons in the head and the ventral nerve cord.</text>
</comment>
<comment type="developmental stage">
    <text evidence="5">Expressed from the L1 stage of larval development to adulthood.</text>
</comment>
<comment type="disruption phenotype">
    <text evidence="4 5 6">Uncoordinated movement, protruding vulva and ray fusion defects in the male tail (PubMed:17506990). RNAi-mediated knockdown results in sterility (PubMed:16710447). RNAi-mediated knockdown in a him-8 mutant background results in no deposition of dimethylated 'Lys-9' of histone H3 (H3K9me2) on asynapsed chromosome pairs (PubMed:21909284).</text>
</comment>